<gene>
    <name evidence="1" type="primary">serS</name>
    <name type="ordered locus">BCG_3897c</name>
</gene>
<proteinExistence type="inferred from homology"/>
<protein>
    <recommendedName>
        <fullName evidence="1">Serine--tRNA ligase</fullName>
        <ecNumber evidence="1">6.1.1.11</ecNumber>
    </recommendedName>
    <alternativeName>
        <fullName evidence="1">Seryl-tRNA synthetase</fullName>
        <shortName evidence="1">SerRS</shortName>
    </alternativeName>
    <alternativeName>
        <fullName evidence="1">Seryl-tRNA(Ser/Sec) synthetase</fullName>
    </alternativeName>
</protein>
<feature type="chain" id="PRO_1000019735" description="Serine--tRNA ligase">
    <location>
        <begin position="1"/>
        <end position="419"/>
    </location>
</feature>
<feature type="binding site" evidence="1">
    <location>
        <begin position="226"/>
        <end position="228"/>
    </location>
    <ligand>
        <name>L-serine</name>
        <dbReference type="ChEBI" id="CHEBI:33384"/>
    </ligand>
</feature>
<feature type="binding site" evidence="1">
    <location>
        <begin position="257"/>
        <end position="259"/>
    </location>
    <ligand>
        <name>ATP</name>
        <dbReference type="ChEBI" id="CHEBI:30616"/>
    </ligand>
</feature>
<feature type="binding site" evidence="1">
    <location>
        <position position="273"/>
    </location>
    <ligand>
        <name>ATP</name>
        <dbReference type="ChEBI" id="CHEBI:30616"/>
    </ligand>
</feature>
<feature type="binding site" evidence="1">
    <location>
        <position position="280"/>
    </location>
    <ligand>
        <name>L-serine</name>
        <dbReference type="ChEBI" id="CHEBI:33384"/>
    </ligand>
</feature>
<feature type="binding site" evidence="1">
    <location>
        <begin position="344"/>
        <end position="347"/>
    </location>
    <ligand>
        <name>ATP</name>
        <dbReference type="ChEBI" id="CHEBI:30616"/>
    </ligand>
</feature>
<feature type="binding site" evidence="1">
    <location>
        <position position="379"/>
    </location>
    <ligand>
        <name>L-serine</name>
        <dbReference type="ChEBI" id="CHEBI:33384"/>
    </ligand>
</feature>
<organism>
    <name type="scientific">Mycobacterium bovis (strain BCG / Pasteur 1173P2)</name>
    <dbReference type="NCBI Taxonomy" id="410289"/>
    <lineage>
        <taxon>Bacteria</taxon>
        <taxon>Bacillati</taxon>
        <taxon>Actinomycetota</taxon>
        <taxon>Actinomycetes</taxon>
        <taxon>Mycobacteriales</taxon>
        <taxon>Mycobacteriaceae</taxon>
        <taxon>Mycobacterium</taxon>
        <taxon>Mycobacterium tuberculosis complex</taxon>
    </lineage>
</organism>
<name>SYS_MYCBP</name>
<reference key="1">
    <citation type="journal article" date="2007" name="Proc. Natl. Acad. Sci. U.S.A.">
        <title>Genome plasticity of BCG and impact on vaccine efficacy.</title>
        <authorList>
            <person name="Brosch R."/>
            <person name="Gordon S.V."/>
            <person name="Garnier T."/>
            <person name="Eiglmeier K."/>
            <person name="Frigui W."/>
            <person name="Valenti P."/>
            <person name="Dos Santos S."/>
            <person name="Duthoy S."/>
            <person name="Lacroix C."/>
            <person name="Garcia-Pelayo C."/>
            <person name="Inwald J.K."/>
            <person name="Golby P."/>
            <person name="Garcia J.N."/>
            <person name="Hewinson R.G."/>
            <person name="Behr M.A."/>
            <person name="Quail M.A."/>
            <person name="Churcher C."/>
            <person name="Barrell B.G."/>
            <person name="Parkhill J."/>
            <person name="Cole S.T."/>
        </authorList>
    </citation>
    <scope>NUCLEOTIDE SEQUENCE [LARGE SCALE GENOMIC DNA]</scope>
    <source>
        <strain>BCG / Pasteur 1173P2</strain>
    </source>
</reference>
<sequence length="419" mass="45324">MIDLKLLRENPDAVRRSQLSRGEDPALVDALLTADAARRAVISTADSLRAEQKAASKSVGGASPEERPPLLRRAKELAEQVKAAEADEVEAEAAFTAAHLAISNVIVDGVPAGGEDDYAVLDVVGEPSYLENPKDHLELGESLGLIDMQRGAKVSGSRFYFLTGRGALLQLGLLQLALKLAVDNGFVPTIPPVLVRPEVMVGTGFLGAHAEEVYRVEGDGLYLVGTSEVPLAGYHSGEILDLSRGPLRYAGWSSCFRREAGSHGKDTRGIIRVHQFDKVEGFVYCTPADAEHEHERLLGWQRQMLARIEVPYRVIDVAAGDLGSSAARKFDCEAWIPTQGAYRELTSTSNCTTFQARRLATRYRDASGKPQIAATLNGTLATTRWLVAILENHQRPDGSVRVPDALVPFVGVEVLEPVA</sequence>
<comment type="function">
    <text evidence="1">Catalyzes the attachment of serine to tRNA(Ser). Is also able to aminoacylate tRNA(Sec) with serine, to form the misacylated tRNA L-seryl-tRNA(Sec), which will be further converted into selenocysteinyl-tRNA(Sec).</text>
</comment>
<comment type="catalytic activity">
    <reaction evidence="1">
        <text>tRNA(Ser) + L-serine + ATP = L-seryl-tRNA(Ser) + AMP + diphosphate + H(+)</text>
        <dbReference type="Rhea" id="RHEA:12292"/>
        <dbReference type="Rhea" id="RHEA-COMP:9669"/>
        <dbReference type="Rhea" id="RHEA-COMP:9703"/>
        <dbReference type="ChEBI" id="CHEBI:15378"/>
        <dbReference type="ChEBI" id="CHEBI:30616"/>
        <dbReference type="ChEBI" id="CHEBI:33019"/>
        <dbReference type="ChEBI" id="CHEBI:33384"/>
        <dbReference type="ChEBI" id="CHEBI:78442"/>
        <dbReference type="ChEBI" id="CHEBI:78533"/>
        <dbReference type="ChEBI" id="CHEBI:456215"/>
        <dbReference type="EC" id="6.1.1.11"/>
    </reaction>
</comment>
<comment type="catalytic activity">
    <reaction evidence="1">
        <text>tRNA(Sec) + L-serine + ATP = L-seryl-tRNA(Sec) + AMP + diphosphate + H(+)</text>
        <dbReference type="Rhea" id="RHEA:42580"/>
        <dbReference type="Rhea" id="RHEA-COMP:9742"/>
        <dbReference type="Rhea" id="RHEA-COMP:10128"/>
        <dbReference type="ChEBI" id="CHEBI:15378"/>
        <dbReference type="ChEBI" id="CHEBI:30616"/>
        <dbReference type="ChEBI" id="CHEBI:33019"/>
        <dbReference type="ChEBI" id="CHEBI:33384"/>
        <dbReference type="ChEBI" id="CHEBI:78442"/>
        <dbReference type="ChEBI" id="CHEBI:78533"/>
        <dbReference type="ChEBI" id="CHEBI:456215"/>
        <dbReference type="EC" id="6.1.1.11"/>
    </reaction>
</comment>
<comment type="pathway">
    <text evidence="1">Aminoacyl-tRNA biosynthesis; selenocysteinyl-tRNA(Sec) biosynthesis; L-seryl-tRNA(Sec) from L-serine and tRNA(Sec): step 1/1.</text>
</comment>
<comment type="subunit">
    <text evidence="1">Homodimer. The tRNA molecule binds across the dimer.</text>
</comment>
<comment type="subcellular location">
    <subcellularLocation>
        <location evidence="1">Cytoplasm</location>
    </subcellularLocation>
</comment>
<comment type="domain">
    <text evidence="1">Consists of two distinct domains, a catalytic core and a N-terminal extension that is involved in tRNA binding.</text>
</comment>
<comment type="similarity">
    <text evidence="1">Belongs to the class-II aminoacyl-tRNA synthetase family. Type-1 seryl-tRNA synthetase subfamily.</text>
</comment>
<dbReference type="EC" id="6.1.1.11" evidence="1"/>
<dbReference type="EMBL" id="AM408590">
    <property type="protein sequence ID" value="CAL73887.1"/>
    <property type="molecule type" value="Genomic_DNA"/>
</dbReference>
<dbReference type="RefSeq" id="WP_003420889.1">
    <property type="nucleotide sequence ID" value="NC_008769.1"/>
</dbReference>
<dbReference type="SMR" id="A1KQG9"/>
<dbReference type="GeneID" id="45427835"/>
<dbReference type="KEGG" id="mbb:BCG_3897c"/>
<dbReference type="HOGENOM" id="CLU_023797_0_1_11"/>
<dbReference type="UniPathway" id="UPA00906">
    <property type="reaction ID" value="UER00895"/>
</dbReference>
<dbReference type="Proteomes" id="UP000001472">
    <property type="component" value="Chromosome"/>
</dbReference>
<dbReference type="GO" id="GO:0005737">
    <property type="term" value="C:cytoplasm"/>
    <property type="evidence" value="ECO:0007669"/>
    <property type="project" value="UniProtKB-SubCell"/>
</dbReference>
<dbReference type="GO" id="GO:0005524">
    <property type="term" value="F:ATP binding"/>
    <property type="evidence" value="ECO:0007669"/>
    <property type="project" value="UniProtKB-UniRule"/>
</dbReference>
<dbReference type="GO" id="GO:0004828">
    <property type="term" value="F:serine-tRNA ligase activity"/>
    <property type="evidence" value="ECO:0007669"/>
    <property type="project" value="UniProtKB-UniRule"/>
</dbReference>
<dbReference type="GO" id="GO:0016260">
    <property type="term" value="P:selenocysteine biosynthetic process"/>
    <property type="evidence" value="ECO:0007669"/>
    <property type="project" value="UniProtKB-UniRule"/>
</dbReference>
<dbReference type="GO" id="GO:0006434">
    <property type="term" value="P:seryl-tRNA aminoacylation"/>
    <property type="evidence" value="ECO:0007669"/>
    <property type="project" value="UniProtKB-UniRule"/>
</dbReference>
<dbReference type="CDD" id="cd00770">
    <property type="entry name" value="SerRS_core"/>
    <property type="match status" value="1"/>
</dbReference>
<dbReference type="FunFam" id="1.10.287.40:FF:000004">
    <property type="entry name" value="Serine--tRNA ligase"/>
    <property type="match status" value="1"/>
</dbReference>
<dbReference type="FunFam" id="3.30.930.10:FF:000048">
    <property type="entry name" value="Serine--tRNA ligase"/>
    <property type="match status" value="1"/>
</dbReference>
<dbReference type="Gene3D" id="3.30.930.10">
    <property type="entry name" value="Bira Bifunctional Protein, Domain 2"/>
    <property type="match status" value="1"/>
</dbReference>
<dbReference type="Gene3D" id="1.10.287.40">
    <property type="entry name" value="Serine-tRNA synthetase, tRNA binding domain"/>
    <property type="match status" value="1"/>
</dbReference>
<dbReference type="HAMAP" id="MF_00176">
    <property type="entry name" value="Ser_tRNA_synth_type1"/>
    <property type="match status" value="1"/>
</dbReference>
<dbReference type="InterPro" id="IPR002314">
    <property type="entry name" value="aa-tRNA-synt_IIb"/>
</dbReference>
<dbReference type="InterPro" id="IPR006195">
    <property type="entry name" value="aa-tRNA-synth_II"/>
</dbReference>
<dbReference type="InterPro" id="IPR045864">
    <property type="entry name" value="aa-tRNA-synth_II/BPL/LPL"/>
</dbReference>
<dbReference type="InterPro" id="IPR002317">
    <property type="entry name" value="Ser-tRNA-ligase_type_1"/>
</dbReference>
<dbReference type="InterPro" id="IPR015866">
    <property type="entry name" value="Ser-tRNA-synth_1_N"/>
</dbReference>
<dbReference type="InterPro" id="IPR042103">
    <property type="entry name" value="SerRS_1_N_sf"/>
</dbReference>
<dbReference type="InterPro" id="IPR033729">
    <property type="entry name" value="SerRS_core"/>
</dbReference>
<dbReference type="InterPro" id="IPR010978">
    <property type="entry name" value="tRNA-bd_arm"/>
</dbReference>
<dbReference type="NCBIfam" id="TIGR00414">
    <property type="entry name" value="serS"/>
    <property type="match status" value="1"/>
</dbReference>
<dbReference type="PANTHER" id="PTHR11778">
    <property type="entry name" value="SERYL-TRNA SYNTHETASE"/>
    <property type="match status" value="1"/>
</dbReference>
<dbReference type="Pfam" id="PF02403">
    <property type="entry name" value="Seryl_tRNA_N"/>
    <property type="match status" value="1"/>
</dbReference>
<dbReference type="Pfam" id="PF00587">
    <property type="entry name" value="tRNA-synt_2b"/>
    <property type="match status" value="1"/>
</dbReference>
<dbReference type="PIRSF" id="PIRSF001529">
    <property type="entry name" value="Ser-tRNA-synth_IIa"/>
    <property type="match status" value="1"/>
</dbReference>
<dbReference type="PRINTS" id="PR00981">
    <property type="entry name" value="TRNASYNTHSER"/>
</dbReference>
<dbReference type="SUPFAM" id="SSF55681">
    <property type="entry name" value="Class II aaRS and biotin synthetases"/>
    <property type="match status" value="1"/>
</dbReference>
<dbReference type="SUPFAM" id="SSF46589">
    <property type="entry name" value="tRNA-binding arm"/>
    <property type="match status" value="1"/>
</dbReference>
<dbReference type="PROSITE" id="PS50862">
    <property type="entry name" value="AA_TRNA_LIGASE_II"/>
    <property type="match status" value="1"/>
</dbReference>
<accession>A1KQG9</accession>
<keyword id="KW-0030">Aminoacyl-tRNA synthetase</keyword>
<keyword id="KW-0067">ATP-binding</keyword>
<keyword id="KW-0963">Cytoplasm</keyword>
<keyword id="KW-0436">Ligase</keyword>
<keyword id="KW-0547">Nucleotide-binding</keyword>
<keyword id="KW-0648">Protein biosynthesis</keyword>
<evidence type="ECO:0000255" key="1">
    <source>
        <dbReference type="HAMAP-Rule" id="MF_00176"/>
    </source>
</evidence>